<keyword id="KW-1185">Reference proteome</keyword>
<keyword id="KW-0687">Ribonucleoprotein</keyword>
<keyword id="KW-0689">Ribosomal protein</keyword>
<dbReference type="EMBL" id="BX548175">
    <property type="protein sequence ID" value="CAE21481.1"/>
    <property type="molecule type" value="Genomic_DNA"/>
</dbReference>
<dbReference type="RefSeq" id="WP_011130675.1">
    <property type="nucleotide sequence ID" value="NC_005071.1"/>
</dbReference>
<dbReference type="SMR" id="Q7V668"/>
<dbReference type="KEGG" id="pmt:PMT_1306"/>
<dbReference type="eggNOG" id="COG0335">
    <property type="taxonomic scope" value="Bacteria"/>
</dbReference>
<dbReference type="HOGENOM" id="CLU_103507_2_0_3"/>
<dbReference type="OrthoDB" id="9803541at2"/>
<dbReference type="Proteomes" id="UP000001423">
    <property type="component" value="Chromosome"/>
</dbReference>
<dbReference type="GO" id="GO:0022625">
    <property type="term" value="C:cytosolic large ribosomal subunit"/>
    <property type="evidence" value="ECO:0007669"/>
    <property type="project" value="TreeGrafter"/>
</dbReference>
<dbReference type="GO" id="GO:0003735">
    <property type="term" value="F:structural constituent of ribosome"/>
    <property type="evidence" value="ECO:0007669"/>
    <property type="project" value="InterPro"/>
</dbReference>
<dbReference type="GO" id="GO:0006412">
    <property type="term" value="P:translation"/>
    <property type="evidence" value="ECO:0007669"/>
    <property type="project" value="UniProtKB-UniRule"/>
</dbReference>
<dbReference type="FunFam" id="2.30.30.790:FF:000001">
    <property type="entry name" value="50S ribosomal protein L19"/>
    <property type="match status" value="1"/>
</dbReference>
<dbReference type="Gene3D" id="2.30.30.790">
    <property type="match status" value="1"/>
</dbReference>
<dbReference type="HAMAP" id="MF_00402">
    <property type="entry name" value="Ribosomal_bL19"/>
    <property type="match status" value="1"/>
</dbReference>
<dbReference type="InterPro" id="IPR001857">
    <property type="entry name" value="Ribosomal_bL19"/>
</dbReference>
<dbReference type="InterPro" id="IPR018257">
    <property type="entry name" value="Ribosomal_bL19_CS"/>
</dbReference>
<dbReference type="InterPro" id="IPR038657">
    <property type="entry name" value="Ribosomal_bL19_sf"/>
</dbReference>
<dbReference type="InterPro" id="IPR008991">
    <property type="entry name" value="Translation_prot_SH3-like_sf"/>
</dbReference>
<dbReference type="NCBIfam" id="TIGR01024">
    <property type="entry name" value="rplS_bact"/>
    <property type="match status" value="1"/>
</dbReference>
<dbReference type="PANTHER" id="PTHR15680:SF9">
    <property type="entry name" value="LARGE RIBOSOMAL SUBUNIT PROTEIN BL19M"/>
    <property type="match status" value="1"/>
</dbReference>
<dbReference type="PANTHER" id="PTHR15680">
    <property type="entry name" value="RIBOSOMAL PROTEIN L19"/>
    <property type="match status" value="1"/>
</dbReference>
<dbReference type="Pfam" id="PF01245">
    <property type="entry name" value="Ribosomal_L19"/>
    <property type="match status" value="1"/>
</dbReference>
<dbReference type="PRINTS" id="PR00061">
    <property type="entry name" value="RIBOSOMALL19"/>
</dbReference>
<dbReference type="SUPFAM" id="SSF50104">
    <property type="entry name" value="Translation proteins SH3-like domain"/>
    <property type="match status" value="1"/>
</dbReference>
<dbReference type="PROSITE" id="PS01015">
    <property type="entry name" value="RIBOSOMAL_L19"/>
    <property type="match status" value="1"/>
</dbReference>
<sequence>MTADSKDTSMSEDNTETATAIENSSAMVTDVTSKSAPNVRLSPDALIKEFEASQQKSDLNDIYVGDTVRVGVRISEGNKERIQPYEGVVIAKRHGGIHETITVRRIFQGIGVERVFMLHSPQVASIKVERRGKVRRAKLFYLRERVGKATRVKQRFDR</sequence>
<feature type="chain" id="PRO_0000163508" description="Large ribosomal subunit protein bL19">
    <location>
        <begin position="1"/>
        <end position="158"/>
    </location>
</feature>
<feature type="region of interest" description="Disordered" evidence="2">
    <location>
        <begin position="1"/>
        <end position="35"/>
    </location>
</feature>
<feature type="compositionally biased region" description="Polar residues" evidence="2">
    <location>
        <begin position="16"/>
        <end position="35"/>
    </location>
</feature>
<comment type="function">
    <text evidence="1">This protein is located at the 30S-50S ribosomal subunit interface and may play a role in the structure and function of the aminoacyl-tRNA binding site.</text>
</comment>
<comment type="similarity">
    <text evidence="1">Belongs to the bacterial ribosomal protein bL19 family.</text>
</comment>
<evidence type="ECO:0000255" key="1">
    <source>
        <dbReference type="HAMAP-Rule" id="MF_00402"/>
    </source>
</evidence>
<evidence type="ECO:0000256" key="2">
    <source>
        <dbReference type="SAM" id="MobiDB-lite"/>
    </source>
</evidence>
<evidence type="ECO:0000305" key="3"/>
<organism>
    <name type="scientific">Prochlorococcus marinus (strain MIT 9313)</name>
    <dbReference type="NCBI Taxonomy" id="74547"/>
    <lineage>
        <taxon>Bacteria</taxon>
        <taxon>Bacillati</taxon>
        <taxon>Cyanobacteriota</taxon>
        <taxon>Cyanophyceae</taxon>
        <taxon>Synechococcales</taxon>
        <taxon>Prochlorococcaceae</taxon>
        <taxon>Prochlorococcus</taxon>
    </lineage>
</organism>
<accession>Q7V668</accession>
<proteinExistence type="inferred from homology"/>
<reference key="1">
    <citation type="journal article" date="2003" name="Nature">
        <title>Genome divergence in two Prochlorococcus ecotypes reflects oceanic niche differentiation.</title>
        <authorList>
            <person name="Rocap G."/>
            <person name="Larimer F.W."/>
            <person name="Lamerdin J.E."/>
            <person name="Malfatti S."/>
            <person name="Chain P."/>
            <person name="Ahlgren N.A."/>
            <person name="Arellano A."/>
            <person name="Coleman M."/>
            <person name="Hauser L."/>
            <person name="Hess W.R."/>
            <person name="Johnson Z.I."/>
            <person name="Land M.L."/>
            <person name="Lindell D."/>
            <person name="Post A.F."/>
            <person name="Regala W."/>
            <person name="Shah M."/>
            <person name="Shaw S.L."/>
            <person name="Steglich C."/>
            <person name="Sullivan M.B."/>
            <person name="Ting C.S."/>
            <person name="Tolonen A."/>
            <person name="Webb E.A."/>
            <person name="Zinser E.R."/>
            <person name="Chisholm S.W."/>
        </authorList>
    </citation>
    <scope>NUCLEOTIDE SEQUENCE [LARGE SCALE GENOMIC DNA]</scope>
    <source>
        <strain>MIT 9313</strain>
    </source>
</reference>
<gene>
    <name evidence="1" type="primary">rplS</name>
    <name evidence="1" type="synonym">rpl19</name>
    <name type="ordered locus">PMT_1306</name>
</gene>
<name>RL19_PROMM</name>
<protein>
    <recommendedName>
        <fullName evidence="1">Large ribosomal subunit protein bL19</fullName>
    </recommendedName>
    <alternativeName>
        <fullName evidence="3">50S ribosomal protein L19</fullName>
    </alternativeName>
</protein>